<feature type="chain" id="PRO_0000148239" description="Phosphoribosylformylglycinamidine cyclo-ligase">
    <location>
        <begin position="1"/>
        <end position="356"/>
    </location>
</feature>
<gene>
    <name evidence="1" type="primary">purM</name>
    <name type="ordered locus">R01184</name>
    <name type="ORF">SMc00615</name>
</gene>
<proteinExistence type="inferred from homology"/>
<sequence length="356" mass="36330">MSQSGKNGLTYSDAGVDIDAGNLMVEKIKPHVRSTRRPGADGEIGGFGGLFDLKAAGFSDPVLVAANDGVGTKLKIAIDADKHDTVGIDLVAMCVNDLVVQGAEPLFFLDYFATGKLDPDQGAAIVAGIAAGCREAGCALIGGETAEMPGMYSGGDYDLAGFAVGAAERGQLLPAGDIAEGDVILGLASSGVHSNGYSLVRKIVSLSGLAWDAPAPFGEGTLADLLMTPTRIYVKPLLKAIRETGAIKALAHITGGGFPENIPRVLPKHLAAEIDLGAIKPPAVFSWLAKTGGVAANEMLRTFNCGVGMIAVVPASEAEKVAAVLAGEGETVFTLGRMVARAEGAPGTIYKGNLAI</sequence>
<protein>
    <recommendedName>
        <fullName evidence="1">Phosphoribosylformylglycinamidine cyclo-ligase</fullName>
        <ecNumber evidence="1">6.3.3.1</ecNumber>
    </recommendedName>
    <alternativeName>
        <fullName evidence="1">AIR synthase</fullName>
    </alternativeName>
    <alternativeName>
        <fullName evidence="1">AIRS</fullName>
    </alternativeName>
    <alternativeName>
        <fullName evidence="1">Phosphoribosyl-aminoimidazole synthetase</fullName>
    </alternativeName>
</protein>
<name>PUR5_RHIME</name>
<reference key="1">
    <citation type="journal article" date="2001" name="Proc. Natl. Acad. Sci. U.S.A.">
        <title>Analysis of the chromosome sequence of the legume symbiont Sinorhizobium meliloti strain 1021.</title>
        <authorList>
            <person name="Capela D."/>
            <person name="Barloy-Hubler F."/>
            <person name="Gouzy J."/>
            <person name="Bothe G."/>
            <person name="Ampe F."/>
            <person name="Batut J."/>
            <person name="Boistard P."/>
            <person name="Becker A."/>
            <person name="Boutry M."/>
            <person name="Cadieu E."/>
            <person name="Dreano S."/>
            <person name="Gloux S."/>
            <person name="Godrie T."/>
            <person name="Goffeau A."/>
            <person name="Kahn D."/>
            <person name="Kiss E."/>
            <person name="Lelaure V."/>
            <person name="Masuy D."/>
            <person name="Pohl T."/>
            <person name="Portetelle D."/>
            <person name="Puehler A."/>
            <person name="Purnelle B."/>
            <person name="Ramsperger U."/>
            <person name="Renard C."/>
            <person name="Thebault P."/>
            <person name="Vandenbol M."/>
            <person name="Weidner S."/>
            <person name="Galibert F."/>
        </authorList>
    </citation>
    <scope>NUCLEOTIDE SEQUENCE [LARGE SCALE GENOMIC DNA]</scope>
    <source>
        <strain>1021</strain>
    </source>
</reference>
<reference key="2">
    <citation type="journal article" date="2001" name="Science">
        <title>The composite genome of the legume symbiont Sinorhizobium meliloti.</title>
        <authorList>
            <person name="Galibert F."/>
            <person name="Finan T.M."/>
            <person name="Long S.R."/>
            <person name="Puehler A."/>
            <person name="Abola P."/>
            <person name="Ampe F."/>
            <person name="Barloy-Hubler F."/>
            <person name="Barnett M.J."/>
            <person name="Becker A."/>
            <person name="Boistard P."/>
            <person name="Bothe G."/>
            <person name="Boutry M."/>
            <person name="Bowser L."/>
            <person name="Buhrmester J."/>
            <person name="Cadieu E."/>
            <person name="Capela D."/>
            <person name="Chain P."/>
            <person name="Cowie A."/>
            <person name="Davis R.W."/>
            <person name="Dreano S."/>
            <person name="Federspiel N.A."/>
            <person name="Fisher R.F."/>
            <person name="Gloux S."/>
            <person name="Godrie T."/>
            <person name="Goffeau A."/>
            <person name="Golding B."/>
            <person name="Gouzy J."/>
            <person name="Gurjal M."/>
            <person name="Hernandez-Lucas I."/>
            <person name="Hong A."/>
            <person name="Huizar L."/>
            <person name="Hyman R.W."/>
            <person name="Jones T."/>
            <person name="Kahn D."/>
            <person name="Kahn M.L."/>
            <person name="Kalman S."/>
            <person name="Keating D.H."/>
            <person name="Kiss E."/>
            <person name="Komp C."/>
            <person name="Lelaure V."/>
            <person name="Masuy D."/>
            <person name="Palm C."/>
            <person name="Peck M.C."/>
            <person name="Pohl T.M."/>
            <person name="Portetelle D."/>
            <person name="Purnelle B."/>
            <person name="Ramsperger U."/>
            <person name="Surzycki R."/>
            <person name="Thebault P."/>
            <person name="Vandenbol M."/>
            <person name="Vorhoelter F.J."/>
            <person name="Weidner S."/>
            <person name="Wells D.H."/>
            <person name="Wong K."/>
            <person name="Yeh K.-C."/>
            <person name="Batut J."/>
        </authorList>
    </citation>
    <scope>NUCLEOTIDE SEQUENCE [LARGE SCALE GENOMIC DNA]</scope>
    <source>
        <strain>1021</strain>
    </source>
</reference>
<keyword id="KW-0067">ATP-binding</keyword>
<keyword id="KW-0963">Cytoplasm</keyword>
<keyword id="KW-0436">Ligase</keyword>
<keyword id="KW-0547">Nucleotide-binding</keyword>
<keyword id="KW-0658">Purine biosynthesis</keyword>
<keyword id="KW-1185">Reference proteome</keyword>
<organism>
    <name type="scientific">Rhizobium meliloti (strain 1021)</name>
    <name type="common">Ensifer meliloti</name>
    <name type="synonym">Sinorhizobium meliloti</name>
    <dbReference type="NCBI Taxonomy" id="266834"/>
    <lineage>
        <taxon>Bacteria</taxon>
        <taxon>Pseudomonadati</taxon>
        <taxon>Pseudomonadota</taxon>
        <taxon>Alphaproteobacteria</taxon>
        <taxon>Hyphomicrobiales</taxon>
        <taxon>Rhizobiaceae</taxon>
        <taxon>Sinorhizobium/Ensifer group</taxon>
        <taxon>Sinorhizobium</taxon>
    </lineage>
</organism>
<dbReference type="EC" id="6.3.3.1" evidence="1"/>
<dbReference type="EMBL" id="AL591688">
    <property type="protein sequence ID" value="CAC45763.1"/>
    <property type="molecule type" value="Genomic_DNA"/>
</dbReference>
<dbReference type="RefSeq" id="NP_385290.1">
    <property type="nucleotide sequence ID" value="NC_003047.1"/>
</dbReference>
<dbReference type="RefSeq" id="WP_010969094.1">
    <property type="nucleotide sequence ID" value="NC_003047.1"/>
</dbReference>
<dbReference type="SMR" id="Q92QW2"/>
<dbReference type="EnsemblBacteria" id="CAC45763">
    <property type="protein sequence ID" value="CAC45763"/>
    <property type="gene ID" value="SMc00615"/>
</dbReference>
<dbReference type="KEGG" id="sme:SMc00615"/>
<dbReference type="PATRIC" id="fig|266834.11.peg.2595"/>
<dbReference type="eggNOG" id="COG0150">
    <property type="taxonomic scope" value="Bacteria"/>
</dbReference>
<dbReference type="HOGENOM" id="CLU_047116_0_0_5"/>
<dbReference type="OrthoDB" id="9777881at2"/>
<dbReference type="UniPathway" id="UPA00074">
    <property type="reaction ID" value="UER00129"/>
</dbReference>
<dbReference type="Proteomes" id="UP000001976">
    <property type="component" value="Chromosome"/>
</dbReference>
<dbReference type="GO" id="GO:0005829">
    <property type="term" value="C:cytosol"/>
    <property type="evidence" value="ECO:0007669"/>
    <property type="project" value="TreeGrafter"/>
</dbReference>
<dbReference type="GO" id="GO:0005524">
    <property type="term" value="F:ATP binding"/>
    <property type="evidence" value="ECO:0007669"/>
    <property type="project" value="UniProtKB-KW"/>
</dbReference>
<dbReference type="GO" id="GO:0004637">
    <property type="term" value="F:phosphoribosylamine-glycine ligase activity"/>
    <property type="evidence" value="ECO:0007669"/>
    <property type="project" value="TreeGrafter"/>
</dbReference>
<dbReference type="GO" id="GO:0004641">
    <property type="term" value="F:phosphoribosylformylglycinamidine cyclo-ligase activity"/>
    <property type="evidence" value="ECO:0007669"/>
    <property type="project" value="UniProtKB-UniRule"/>
</dbReference>
<dbReference type="GO" id="GO:0006189">
    <property type="term" value="P:'de novo' IMP biosynthetic process"/>
    <property type="evidence" value="ECO:0007669"/>
    <property type="project" value="UniProtKB-UniRule"/>
</dbReference>
<dbReference type="GO" id="GO:0046084">
    <property type="term" value="P:adenine biosynthetic process"/>
    <property type="evidence" value="ECO:0007669"/>
    <property type="project" value="TreeGrafter"/>
</dbReference>
<dbReference type="CDD" id="cd02196">
    <property type="entry name" value="PurM"/>
    <property type="match status" value="1"/>
</dbReference>
<dbReference type="FunFam" id="3.30.1330.10:FF:000001">
    <property type="entry name" value="Phosphoribosylformylglycinamidine cyclo-ligase"/>
    <property type="match status" value="1"/>
</dbReference>
<dbReference type="FunFam" id="3.90.650.10:FF:000007">
    <property type="entry name" value="Trifunctional purine biosynthetic protein adenosine-3"/>
    <property type="match status" value="1"/>
</dbReference>
<dbReference type="Gene3D" id="3.90.650.10">
    <property type="entry name" value="PurM-like C-terminal domain"/>
    <property type="match status" value="1"/>
</dbReference>
<dbReference type="Gene3D" id="3.30.1330.10">
    <property type="entry name" value="PurM-like, N-terminal domain"/>
    <property type="match status" value="1"/>
</dbReference>
<dbReference type="HAMAP" id="MF_00741">
    <property type="entry name" value="AIRS"/>
    <property type="match status" value="1"/>
</dbReference>
<dbReference type="InterPro" id="IPR010918">
    <property type="entry name" value="PurM-like_C_dom"/>
</dbReference>
<dbReference type="InterPro" id="IPR036676">
    <property type="entry name" value="PurM-like_C_sf"/>
</dbReference>
<dbReference type="InterPro" id="IPR016188">
    <property type="entry name" value="PurM-like_N"/>
</dbReference>
<dbReference type="InterPro" id="IPR036921">
    <property type="entry name" value="PurM-like_N_sf"/>
</dbReference>
<dbReference type="InterPro" id="IPR004733">
    <property type="entry name" value="PurM_cligase"/>
</dbReference>
<dbReference type="NCBIfam" id="TIGR00878">
    <property type="entry name" value="purM"/>
    <property type="match status" value="1"/>
</dbReference>
<dbReference type="PANTHER" id="PTHR10520:SF12">
    <property type="entry name" value="TRIFUNCTIONAL PURINE BIOSYNTHETIC PROTEIN ADENOSINE-3"/>
    <property type="match status" value="1"/>
</dbReference>
<dbReference type="PANTHER" id="PTHR10520">
    <property type="entry name" value="TRIFUNCTIONAL PURINE BIOSYNTHETIC PROTEIN ADENOSINE-3-RELATED"/>
    <property type="match status" value="1"/>
</dbReference>
<dbReference type="Pfam" id="PF00586">
    <property type="entry name" value="AIRS"/>
    <property type="match status" value="1"/>
</dbReference>
<dbReference type="Pfam" id="PF02769">
    <property type="entry name" value="AIRS_C"/>
    <property type="match status" value="1"/>
</dbReference>
<dbReference type="SUPFAM" id="SSF56042">
    <property type="entry name" value="PurM C-terminal domain-like"/>
    <property type="match status" value="1"/>
</dbReference>
<dbReference type="SUPFAM" id="SSF55326">
    <property type="entry name" value="PurM N-terminal domain-like"/>
    <property type="match status" value="1"/>
</dbReference>
<comment type="catalytic activity">
    <reaction evidence="1">
        <text>2-formamido-N(1)-(5-O-phospho-beta-D-ribosyl)acetamidine + ATP = 5-amino-1-(5-phospho-beta-D-ribosyl)imidazole + ADP + phosphate + H(+)</text>
        <dbReference type="Rhea" id="RHEA:23032"/>
        <dbReference type="ChEBI" id="CHEBI:15378"/>
        <dbReference type="ChEBI" id="CHEBI:30616"/>
        <dbReference type="ChEBI" id="CHEBI:43474"/>
        <dbReference type="ChEBI" id="CHEBI:137981"/>
        <dbReference type="ChEBI" id="CHEBI:147287"/>
        <dbReference type="ChEBI" id="CHEBI:456216"/>
        <dbReference type="EC" id="6.3.3.1"/>
    </reaction>
</comment>
<comment type="pathway">
    <text evidence="1">Purine metabolism; IMP biosynthesis via de novo pathway; 5-amino-1-(5-phospho-D-ribosyl)imidazole from N(2)-formyl-N(1)-(5-phospho-D-ribosyl)glycinamide: step 2/2.</text>
</comment>
<comment type="subcellular location">
    <subcellularLocation>
        <location evidence="1">Cytoplasm</location>
    </subcellularLocation>
</comment>
<comment type="similarity">
    <text evidence="1">Belongs to the AIR synthase family.</text>
</comment>
<evidence type="ECO:0000255" key="1">
    <source>
        <dbReference type="HAMAP-Rule" id="MF_00741"/>
    </source>
</evidence>
<accession>Q92QW2</accession>